<protein>
    <recommendedName>
        <fullName evidence="1">DNA-directed RNA polymerase subunit beta'</fullName>
        <shortName evidence="1">RNAP subunit beta'</shortName>
        <ecNumber evidence="1">2.7.7.6</ecNumber>
    </recommendedName>
    <alternativeName>
        <fullName evidence="1">RNA polymerase subunit beta'</fullName>
    </alternativeName>
    <alternativeName>
        <fullName evidence="1">Transcriptase subunit beta'</fullName>
    </alternativeName>
</protein>
<reference key="1">
    <citation type="journal article" date="2009" name="PLoS Pathog.">
        <title>Genomic evidence for the evolution of Streptococcus equi: host restriction, increased virulence, and genetic exchange with human pathogens.</title>
        <authorList>
            <person name="Holden M.T.G."/>
            <person name="Heather Z."/>
            <person name="Paillot R."/>
            <person name="Steward K.F."/>
            <person name="Webb K."/>
            <person name="Ainslie F."/>
            <person name="Jourdan T."/>
            <person name="Bason N.C."/>
            <person name="Holroyd N.E."/>
            <person name="Mungall K."/>
            <person name="Quail M.A."/>
            <person name="Sanders M."/>
            <person name="Simmonds M."/>
            <person name="Willey D."/>
            <person name="Brooks K."/>
            <person name="Aanensen D.M."/>
            <person name="Spratt B.G."/>
            <person name="Jolley K.A."/>
            <person name="Maiden M.C.J."/>
            <person name="Kehoe M."/>
            <person name="Chanter N."/>
            <person name="Bentley S.D."/>
            <person name="Robinson C."/>
            <person name="Maskell D.J."/>
            <person name="Parkhill J."/>
            <person name="Waller A.S."/>
        </authorList>
    </citation>
    <scope>NUCLEOTIDE SEQUENCE [LARGE SCALE GENOMIC DNA]</scope>
    <source>
        <strain>H70</strain>
    </source>
</reference>
<feature type="chain" id="PRO_1000214498" description="DNA-directed RNA polymerase subunit beta'">
    <location>
        <begin position="1"/>
        <end position="1211"/>
    </location>
</feature>
<feature type="binding site" evidence="1">
    <location>
        <position position="60"/>
    </location>
    <ligand>
        <name>Zn(2+)</name>
        <dbReference type="ChEBI" id="CHEBI:29105"/>
        <label>1</label>
    </ligand>
</feature>
<feature type="binding site" evidence="1">
    <location>
        <position position="62"/>
    </location>
    <ligand>
        <name>Zn(2+)</name>
        <dbReference type="ChEBI" id="CHEBI:29105"/>
        <label>1</label>
    </ligand>
</feature>
<feature type="binding site" evidence="1">
    <location>
        <position position="75"/>
    </location>
    <ligand>
        <name>Zn(2+)</name>
        <dbReference type="ChEBI" id="CHEBI:29105"/>
        <label>1</label>
    </ligand>
</feature>
<feature type="binding site" evidence="1">
    <location>
        <position position="78"/>
    </location>
    <ligand>
        <name>Zn(2+)</name>
        <dbReference type="ChEBI" id="CHEBI:29105"/>
        <label>1</label>
    </ligand>
</feature>
<feature type="binding site" evidence="1">
    <location>
        <position position="450"/>
    </location>
    <ligand>
        <name>Mg(2+)</name>
        <dbReference type="ChEBI" id="CHEBI:18420"/>
    </ligand>
</feature>
<feature type="binding site" evidence="1">
    <location>
        <position position="452"/>
    </location>
    <ligand>
        <name>Mg(2+)</name>
        <dbReference type="ChEBI" id="CHEBI:18420"/>
    </ligand>
</feature>
<feature type="binding site" evidence="1">
    <location>
        <position position="454"/>
    </location>
    <ligand>
        <name>Mg(2+)</name>
        <dbReference type="ChEBI" id="CHEBI:18420"/>
    </ligand>
</feature>
<feature type="binding site" evidence="1">
    <location>
        <position position="819"/>
    </location>
    <ligand>
        <name>Zn(2+)</name>
        <dbReference type="ChEBI" id="CHEBI:29105"/>
        <label>2</label>
    </ligand>
</feature>
<feature type="binding site" evidence="1">
    <location>
        <position position="893"/>
    </location>
    <ligand>
        <name>Zn(2+)</name>
        <dbReference type="ChEBI" id="CHEBI:29105"/>
        <label>2</label>
    </ligand>
</feature>
<feature type="binding site" evidence="1">
    <location>
        <position position="900"/>
    </location>
    <ligand>
        <name>Zn(2+)</name>
        <dbReference type="ChEBI" id="CHEBI:29105"/>
        <label>2</label>
    </ligand>
</feature>
<feature type="binding site" evidence="1">
    <location>
        <position position="903"/>
    </location>
    <ligand>
        <name>Zn(2+)</name>
        <dbReference type="ChEBI" id="CHEBI:29105"/>
        <label>2</label>
    </ligand>
</feature>
<comment type="function">
    <text evidence="1">DNA-dependent RNA polymerase catalyzes the transcription of DNA into RNA using the four ribonucleoside triphosphates as substrates.</text>
</comment>
<comment type="catalytic activity">
    <reaction evidence="1">
        <text>RNA(n) + a ribonucleoside 5'-triphosphate = RNA(n+1) + diphosphate</text>
        <dbReference type="Rhea" id="RHEA:21248"/>
        <dbReference type="Rhea" id="RHEA-COMP:14527"/>
        <dbReference type="Rhea" id="RHEA-COMP:17342"/>
        <dbReference type="ChEBI" id="CHEBI:33019"/>
        <dbReference type="ChEBI" id="CHEBI:61557"/>
        <dbReference type="ChEBI" id="CHEBI:140395"/>
        <dbReference type="EC" id="2.7.7.6"/>
    </reaction>
</comment>
<comment type="cofactor">
    <cofactor evidence="1">
        <name>Mg(2+)</name>
        <dbReference type="ChEBI" id="CHEBI:18420"/>
    </cofactor>
    <text evidence="1">Binds 1 Mg(2+) ion per subunit.</text>
</comment>
<comment type="cofactor">
    <cofactor evidence="1">
        <name>Zn(2+)</name>
        <dbReference type="ChEBI" id="CHEBI:29105"/>
    </cofactor>
    <text evidence="1">Binds 2 Zn(2+) ions per subunit.</text>
</comment>
<comment type="subunit">
    <text evidence="1">The RNAP catalytic core consists of 2 alpha, 1 beta, 1 beta' and 1 omega subunit. When a sigma factor is associated with the core the holoenzyme is formed, which can initiate transcription.</text>
</comment>
<comment type="similarity">
    <text evidence="1">Belongs to the RNA polymerase beta' chain family.</text>
</comment>
<name>RPOC_STRS7</name>
<gene>
    <name evidence="1" type="primary">rpoC</name>
    <name type="ordered locus">SZO_00940</name>
</gene>
<organism>
    <name type="scientific">Streptococcus equi subsp. zooepidemicus (strain H70)</name>
    <dbReference type="NCBI Taxonomy" id="553483"/>
    <lineage>
        <taxon>Bacteria</taxon>
        <taxon>Bacillati</taxon>
        <taxon>Bacillota</taxon>
        <taxon>Bacilli</taxon>
        <taxon>Lactobacillales</taxon>
        <taxon>Streptococcaceae</taxon>
        <taxon>Streptococcus</taxon>
    </lineage>
</organism>
<accession>C0MEE4</accession>
<evidence type="ECO:0000255" key="1">
    <source>
        <dbReference type="HAMAP-Rule" id="MF_01322"/>
    </source>
</evidence>
<dbReference type="EC" id="2.7.7.6" evidence="1"/>
<dbReference type="EMBL" id="FM204884">
    <property type="protein sequence ID" value="CAW97723.1"/>
    <property type="molecule type" value="Genomic_DNA"/>
</dbReference>
<dbReference type="SMR" id="C0MEE4"/>
<dbReference type="KEGG" id="seq:SZO_00940"/>
<dbReference type="eggNOG" id="COG0086">
    <property type="taxonomic scope" value="Bacteria"/>
</dbReference>
<dbReference type="HOGENOM" id="CLU_000524_3_0_9"/>
<dbReference type="Proteomes" id="UP000001368">
    <property type="component" value="Chromosome"/>
</dbReference>
<dbReference type="GO" id="GO:0000428">
    <property type="term" value="C:DNA-directed RNA polymerase complex"/>
    <property type="evidence" value="ECO:0007669"/>
    <property type="project" value="UniProtKB-KW"/>
</dbReference>
<dbReference type="GO" id="GO:0003677">
    <property type="term" value="F:DNA binding"/>
    <property type="evidence" value="ECO:0007669"/>
    <property type="project" value="UniProtKB-UniRule"/>
</dbReference>
<dbReference type="GO" id="GO:0003899">
    <property type="term" value="F:DNA-directed RNA polymerase activity"/>
    <property type="evidence" value="ECO:0007669"/>
    <property type="project" value="UniProtKB-UniRule"/>
</dbReference>
<dbReference type="GO" id="GO:0000287">
    <property type="term" value="F:magnesium ion binding"/>
    <property type="evidence" value="ECO:0007669"/>
    <property type="project" value="UniProtKB-UniRule"/>
</dbReference>
<dbReference type="GO" id="GO:0008270">
    <property type="term" value="F:zinc ion binding"/>
    <property type="evidence" value="ECO:0007669"/>
    <property type="project" value="UniProtKB-UniRule"/>
</dbReference>
<dbReference type="GO" id="GO:0006351">
    <property type="term" value="P:DNA-templated transcription"/>
    <property type="evidence" value="ECO:0007669"/>
    <property type="project" value="UniProtKB-UniRule"/>
</dbReference>
<dbReference type="CDD" id="cd02655">
    <property type="entry name" value="RNAP_beta'_C"/>
    <property type="match status" value="1"/>
</dbReference>
<dbReference type="CDD" id="cd01609">
    <property type="entry name" value="RNAP_beta'_N"/>
    <property type="match status" value="1"/>
</dbReference>
<dbReference type="FunFam" id="1.10.150.390:FF:000002">
    <property type="entry name" value="DNA-directed RNA polymerase subunit beta"/>
    <property type="match status" value="1"/>
</dbReference>
<dbReference type="FunFam" id="4.10.860.120:FF:000001">
    <property type="entry name" value="DNA-directed RNA polymerase subunit beta"/>
    <property type="match status" value="1"/>
</dbReference>
<dbReference type="Gene3D" id="1.10.132.30">
    <property type="match status" value="1"/>
</dbReference>
<dbReference type="Gene3D" id="1.10.150.390">
    <property type="match status" value="1"/>
</dbReference>
<dbReference type="Gene3D" id="1.10.1790.20">
    <property type="match status" value="1"/>
</dbReference>
<dbReference type="Gene3D" id="1.10.40.90">
    <property type="match status" value="1"/>
</dbReference>
<dbReference type="Gene3D" id="2.40.40.20">
    <property type="match status" value="1"/>
</dbReference>
<dbReference type="Gene3D" id="2.40.50.100">
    <property type="match status" value="1"/>
</dbReference>
<dbReference type="Gene3D" id="4.10.860.120">
    <property type="entry name" value="RNA polymerase II, clamp domain"/>
    <property type="match status" value="1"/>
</dbReference>
<dbReference type="Gene3D" id="1.10.274.100">
    <property type="entry name" value="RNA polymerase Rpb1, domain 3"/>
    <property type="match status" value="1"/>
</dbReference>
<dbReference type="HAMAP" id="MF_01322">
    <property type="entry name" value="RNApol_bact_RpoC"/>
    <property type="match status" value="1"/>
</dbReference>
<dbReference type="InterPro" id="IPR045867">
    <property type="entry name" value="DNA-dir_RpoC_beta_prime"/>
</dbReference>
<dbReference type="InterPro" id="IPR012754">
    <property type="entry name" value="DNA-dir_RpoC_beta_prime_bact"/>
</dbReference>
<dbReference type="InterPro" id="IPR000722">
    <property type="entry name" value="RNA_pol_asu"/>
</dbReference>
<dbReference type="InterPro" id="IPR006592">
    <property type="entry name" value="RNA_pol_N"/>
</dbReference>
<dbReference type="InterPro" id="IPR007080">
    <property type="entry name" value="RNA_pol_Rpb1_1"/>
</dbReference>
<dbReference type="InterPro" id="IPR007066">
    <property type="entry name" value="RNA_pol_Rpb1_3"/>
</dbReference>
<dbReference type="InterPro" id="IPR042102">
    <property type="entry name" value="RNA_pol_Rpb1_3_sf"/>
</dbReference>
<dbReference type="InterPro" id="IPR007083">
    <property type="entry name" value="RNA_pol_Rpb1_4"/>
</dbReference>
<dbReference type="InterPro" id="IPR007081">
    <property type="entry name" value="RNA_pol_Rpb1_5"/>
</dbReference>
<dbReference type="InterPro" id="IPR044893">
    <property type="entry name" value="RNA_pol_Rpb1_clamp_domain"/>
</dbReference>
<dbReference type="InterPro" id="IPR038120">
    <property type="entry name" value="Rpb1_funnel_sf"/>
</dbReference>
<dbReference type="NCBIfam" id="TIGR02386">
    <property type="entry name" value="rpoC_TIGR"/>
    <property type="match status" value="1"/>
</dbReference>
<dbReference type="PANTHER" id="PTHR19376">
    <property type="entry name" value="DNA-DIRECTED RNA POLYMERASE"/>
    <property type="match status" value="1"/>
</dbReference>
<dbReference type="PANTHER" id="PTHR19376:SF54">
    <property type="entry name" value="DNA-DIRECTED RNA POLYMERASE SUBUNIT BETA"/>
    <property type="match status" value="1"/>
</dbReference>
<dbReference type="Pfam" id="PF04997">
    <property type="entry name" value="RNA_pol_Rpb1_1"/>
    <property type="match status" value="1"/>
</dbReference>
<dbReference type="Pfam" id="PF00623">
    <property type="entry name" value="RNA_pol_Rpb1_2"/>
    <property type="match status" value="2"/>
</dbReference>
<dbReference type="Pfam" id="PF04983">
    <property type="entry name" value="RNA_pol_Rpb1_3"/>
    <property type="match status" value="1"/>
</dbReference>
<dbReference type="Pfam" id="PF05000">
    <property type="entry name" value="RNA_pol_Rpb1_4"/>
    <property type="match status" value="1"/>
</dbReference>
<dbReference type="Pfam" id="PF04998">
    <property type="entry name" value="RNA_pol_Rpb1_5"/>
    <property type="match status" value="1"/>
</dbReference>
<dbReference type="SMART" id="SM00663">
    <property type="entry name" value="RPOLA_N"/>
    <property type="match status" value="1"/>
</dbReference>
<dbReference type="SUPFAM" id="SSF64484">
    <property type="entry name" value="beta and beta-prime subunits of DNA dependent RNA-polymerase"/>
    <property type="match status" value="1"/>
</dbReference>
<proteinExistence type="inferred from homology"/>
<sequence length="1211" mass="135326">MVDVNRFKSMQITLASPSKVRSWSYGEVKKPETINYRTLKPEREGLFDEVIFGPTKDWECACGKYKRIRYKGIVCDRCGVEVTRAKVRRERMGHIELKAPVSHIWYFKGIPSRMGLTLDMSPRALEEVIYFAAYVVIDPKDTPLEPKSLLTEREYREKIQEYGHGSFIAKMGAEAIQDLLKRVDLVTEIAELKEELKTATGQKRIKAVRRLDVLDAFNKSGNKPEWMILNILPVIPPDLRPMVQLDGGRFAASDLNDLYRRVINRNNRLARLLELNAPGIIVQNEKRMLQEAVDALIDNGRRGRPITGPGSRPLKSLSHMLKGKQGRFRQNLLGKRVDFSGRSVIAVGPTLKMYQCGVPREMAIELFKPFVMREIVAREFAGNVKAAKRMVERGDERIWDILEEVIKEHPVLLNRAPTLHRLGIQAFEPVLIDGKALRLHPLVCEAYNADFDGDQMAIHVPLSEEAQAEARLLMLAAEHILNPKDGKPVVTPSQDMVLGNYYLTMEDAGREGEGMIFKDKDEAVMAYRNGYVHLHSRVGIAVDSMPSKPWKDSQRHKIMVTTVGKILFNDIMPEDLPYLQEPNNANLTEGTPDKYFLEPGQNIQEVIDSLPINVPFKKKNLGNIIAETFKRFRTTETSAFLDRLKDLGYYHSTLAGLTVGIADIPVIDNKAEIIEAAHHRVEEINKAFRRGLMTDDDRYVAVTTTWREAKEALEKRLIETQDPKNPIVMMMDSGARGNISNFSQLAGMRGLMAAPNGRIMELPILSNFREGLSVLEMFFSTHGARKGMTDTALKTADSGYLTRRLVDVAQDVIIREDDCGTDRGLLIRAITDGKEVTETLEERLQGRYTRKSVKHPETGEVLIGADQLITEDMARKIVDAGVEEVTIRSVFTCATRHGVCRHCYGINLATGDAVEVGEAVGTIAAQSIGEPGTQLTMRTFHTGGVASNTDITQGLPRIQEIFEARNPKGEAVITEVKGTVIEIEEDASTRTKKVYVQGKTGMGEYVVPFTARMKVEVGDEVNRGAALTEGSIQPKHLLEVRDTLSVETYLLAEVQKVYRSQGVEIGDKHVEVMVRQMLRKVRVMDPGDTDLLPGTLMDIADFTDANKEIVISGGIPATSRPVLMGITKASLETNSFLSAASFQETTRVLTDAAIRGKKDHLLGLKENVIIGKIIPAGTGMVRYRNIEPQAINEVEVIEEAEATEEPAIIKE</sequence>
<keyword id="KW-0240">DNA-directed RNA polymerase</keyword>
<keyword id="KW-0460">Magnesium</keyword>
<keyword id="KW-0479">Metal-binding</keyword>
<keyword id="KW-0548">Nucleotidyltransferase</keyword>
<keyword id="KW-0804">Transcription</keyword>
<keyword id="KW-0808">Transferase</keyword>
<keyword id="KW-0862">Zinc</keyword>